<gene>
    <name type="primary">LIN7A</name>
    <name type="synonym">MALS1</name>
    <name type="synonym">VELI1</name>
</gene>
<name>LIN7A_HUMAN</name>
<sequence>MLKPSVTSAPTADMATLTVVQPLTLDRDVARAIELLEKLQESGEVPVHKLQSLKKVLQSEFCTAIREVYQYMHETITVNGCPEFRARATAKATVAAFAASEGHSHPRVVELPKTDEGLGFNVMGGKEQNSPIYISRIIPGGVAERHGGLKRGDQLLSVNGVSVEGEHHEKAVELLKAAKDSVKLVVRYTPKVLEEMEARFEKLRTARRRQQQQLLIQQQQQQQQQQTQQNHMS</sequence>
<proteinExistence type="evidence at protein level"/>
<organism>
    <name type="scientific">Homo sapiens</name>
    <name type="common">Human</name>
    <dbReference type="NCBI Taxonomy" id="9606"/>
    <lineage>
        <taxon>Eukaryota</taxon>
        <taxon>Metazoa</taxon>
        <taxon>Chordata</taxon>
        <taxon>Craniata</taxon>
        <taxon>Vertebrata</taxon>
        <taxon>Euteleostomi</taxon>
        <taxon>Mammalia</taxon>
        <taxon>Eutheria</taxon>
        <taxon>Euarchontoglires</taxon>
        <taxon>Primates</taxon>
        <taxon>Haplorrhini</taxon>
        <taxon>Catarrhini</taxon>
        <taxon>Hominidae</taxon>
        <taxon>Homo</taxon>
    </lineage>
</organism>
<accession>O14910</accession>
<accession>A4FTY3</accession>
<accession>Q147W1</accession>
<accession>Q6LES3</accession>
<accession>Q7LDS4</accession>
<feature type="chain" id="PRO_0000189623" description="Protein lin-7 homolog A">
    <location>
        <begin position="1"/>
        <end position="233"/>
    </location>
</feature>
<feature type="domain" description="L27" evidence="4">
    <location>
        <begin position="25"/>
        <end position="80"/>
    </location>
</feature>
<feature type="domain" description="PDZ" evidence="3">
    <location>
        <begin position="108"/>
        <end position="190"/>
    </location>
</feature>
<feature type="short sequence motif" description="Kinase interacting site">
    <location>
        <begin position="14"/>
        <end position="28"/>
    </location>
</feature>
<feature type="sequence conflict" description="In Ref. 3; CAG28608." evidence="10" ref="3">
    <original>S</original>
    <variation>P</variation>
    <location>
        <position position="157"/>
    </location>
</feature>
<dbReference type="EMBL" id="AF087693">
    <property type="protein sequence ID" value="AAC78481.1"/>
    <property type="molecule type" value="mRNA"/>
</dbReference>
<dbReference type="EMBL" id="AF173081">
    <property type="protein sequence ID" value="AAD48500.1"/>
    <property type="molecule type" value="mRNA"/>
</dbReference>
<dbReference type="EMBL" id="CR407680">
    <property type="protein sequence ID" value="CAG28608.1"/>
    <property type="molecule type" value="mRNA"/>
</dbReference>
<dbReference type="EMBL" id="AK315321">
    <property type="protein sequence ID" value="BAG37724.1"/>
    <property type="molecule type" value="mRNA"/>
</dbReference>
<dbReference type="EMBL" id="BC099921">
    <property type="protein sequence ID" value="AAH99921.1"/>
    <property type="molecule type" value="mRNA"/>
</dbReference>
<dbReference type="EMBL" id="BC118609">
    <property type="protein sequence ID" value="AAI18610.1"/>
    <property type="molecule type" value="mRNA"/>
</dbReference>
<dbReference type="EMBL" id="BC122561">
    <property type="protein sequence ID" value="AAI22562.1"/>
    <property type="molecule type" value="mRNA"/>
</dbReference>
<dbReference type="EMBL" id="AF028826">
    <property type="protein sequence ID" value="AAB84251.1"/>
    <property type="molecule type" value="mRNA"/>
</dbReference>
<dbReference type="CCDS" id="CCDS9021.1"/>
<dbReference type="RefSeq" id="NP_004655.1">
    <property type="nucleotide sequence ID" value="NM_004664.4"/>
</dbReference>
<dbReference type="SMR" id="O14910"/>
<dbReference type="BioGRID" id="114352">
    <property type="interactions" value="62"/>
</dbReference>
<dbReference type="ComplexPortal" id="CPX-7744">
    <property type="entry name" value="LIN-10-LIN-2-LIN-7 complex, LIN7A variant"/>
</dbReference>
<dbReference type="CORUM" id="O14910"/>
<dbReference type="FunCoup" id="O14910">
    <property type="interactions" value="308"/>
</dbReference>
<dbReference type="IntAct" id="O14910">
    <property type="interactions" value="45"/>
</dbReference>
<dbReference type="MINT" id="O14910"/>
<dbReference type="STRING" id="9606.ENSP00000447488"/>
<dbReference type="iPTMnet" id="O14910"/>
<dbReference type="PhosphoSitePlus" id="O14910"/>
<dbReference type="BioMuta" id="LIN7A"/>
<dbReference type="jPOST" id="O14910"/>
<dbReference type="MassIVE" id="O14910"/>
<dbReference type="PaxDb" id="9606-ENSP00000447488"/>
<dbReference type="PeptideAtlas" id="O14910"/>
<dbReference type="ProteomicsDB" id="48294"/>
<dbReference type="Pumba" id="O14910"/>
<dbReference type="Antibodypedia" id="29812">
    <property type="antibodies" value="179 antibodies from 26 providers"/>
</dbReference>
<dbReference type="DNASU" id="8825"/>
<dbReference type="Ensembl" id="ENST00000552864.6">
    <property type="protein sequence ID" value="ENSP00000447488.1"/>
    <property type="gene ID" value="ENSG00000111052.8"/>
</dbReference>
<dbReference type="GeneID" id="8825"/>
<dbReference type="KEGG" id="hsa:8825"/>
<dbReference type="MANE-Select" id="ENST00000552864.6">
    <property type="protein sequence ID" value="ENSP00000447488.1"/>
    <property type="RefSeq nucleotide sequence ID" value="NM_004664.4"/>
    <property type="RefSeq protein sequence ID" value="NP_004655.1"/>
</dbReference>
<dbReference type="UCSC" id="uc001szi.4">
    <property type="organism name" value="human"/>
</dbReference>
<dbReference type="AGR" id="HGNC:17787"/>
<dbReference type="CTD" id="8825"/>
<dbReference type="DisGeNET" id="8825"/>
<dbReference type="GeneCards" id="LIN7A"/>
<dbReference type="HGNC" id="HGNC:17787">
    <property type="gene designation" value="LIN7A"/>
</dbReference>
<dbReference type="HPA" id="ENSG00000111052">
    <property type="expression patterns" value="Tissue enhanced (bone marrow, retina)"/>
</dbReference>
<dbReference type="MalaCards" id="LIN7A"/>
<dbReference type="MIM" id="603380">
    <property type="type" value="gene"/>
</dbReference>
<dbReference type="neXtProt" id="NX_O14910"/>
<dbReference type="OpenTargets" id="ENSG00000111052"/>
<dbReference type="PharmGKB" id="PA134881936"/>
<dbReference type="VEuPathDB" id="HostDB:ENSG00000111052"/>
<dbReference type="eggNOG" id="KOG3550">
    <property type="taxonomic scope" value="Eukaryota"/>
</dbReference>
<dbReference type="GeneTree" id="ENSGT00940000153222"/>
<dbReference type="InParanoid" id="O14910"/>
<dbReference type="OMA" id="EHETEFI"/>
<dbReference type="OrthoDB" id="10056216at2759"/>
<dbReference type="PAN-GO" id="O14910">
    <property type="GO annotations" value="8 GO annotations based on evolutionary models"/>
</dbReference>
<dbReference type="PhylomeDB" id="O14910"/>
<dbReference type="TreeFam" id="TF316850"/>
<dbReference type="PathwayCommons" id="O14910"/>
<dbReference type="Reactome" id="R-HSA-212676">
    <property type="pathway name" value="Dopamine Neurotransmitter Release Cycle"/>
</dbReference>
<dbReference type="Reactome" id="R-HSA-6794361">
    <property type="pathway name" value="Neurexins and neuroligins"/>
</dbReference>
<dbReference type="Reactome" id="R-HSA-9609736">
    <property type="pathway name" value="Assembly and cell surface presentation of NMDA receptors"/>
</dbReference>
<dbReference type="SignaLink" id="O14910"/>
<dbReference type="BioGRID-ORCS" id="8825">
    <property type="hits" value="6 hits in 1149 CRISPR screens"/>
</dbReference>
<dbReference type="CD-CODE" id="FB4E32DD">
    <property type="entry name" value="Presynaptic clusters and postsynaptic densities"/>
</dbReference>
<dbReference type="ChiTaRS" id="LIN7A">
    <property type="organism name" value="human"/>
</dbReference>
<dbReference type="GeneWiki" id="LIN7A"/>
<dbReference type="GenomeRNAi" id="8825"/>
<dbReference type="Pharos" id="O14910">
    <property type="development level" value="Tbio"/>
</dbReference>
<dbReference type="PRO" id="PR:O14910"/>
<dbReference type="Proteomes" id="UP000005640">
    <property type="component" value="Chromosome 12"/>
</dbReference>
<dbReference type="RNAct" id="O14910">
    <property type="molecule type" value="protein"/>
</dbReference>
<dbReference type="Bgee" id="ENSG00000111052">
    <property type="expression patterns" value="Expressed in Brodmann (1909) area 23 and 149 other cell types or tissues"/>
</dbReference>
<dbReference type="ExpressionAtlas" id="O14910">
    <property type="expression patterns" value="baseline and differential"/>
</dbReference>
<dbReference type="GO" id="GO:0016323">
    <property type="term" value="C:basolateral plasma membrane"/>
    <property type="evidence" value="ECO:0000318"/>
    <property type="project" value="GO_Central"/>
</dbReference>
<dbReference type="GO" id="GO:0005923">
    <property type="term" value="C:bicellular tight junction"/>
    <property type="evidence" value="ECO:0007669"/>
    <property type="project" value="UniProtKB-SubCell"/>
</dbReference>
<dbReference type="GO" id="GO:0005911">
    <property type="term" value="C:cell-cell junction"/>
    <property type="evidence" value="ECO:0000318"/>
    <property type="project" value="GO_Central"/>
</dbReference>
<dbReference type="GO" id="GO:0070062">
    <property type="term" value="C:extracellular exosome"/>
    <property type="evidence" value="ECO:0007005"/>
    <property type="project" value="UniProtKB"/>
</dbReference>
<dbReference type="GO" id="GO:0097025">
    <property type="term" value="C:MPP7-DLG1-LIN7 complex"/>
    <property type="evidence" value="ECO:0000318"/>
    <property type="project" value="GO_Central"/>
</dbReference>
<dbReference type="GO" id="GO:0005886">
    <property type="term" value="C:plasma membrane"/>
    <property type="evidence" value="ECO:0000304"/>
    <property type="project" value="Reactome"/>
</dbReference>
<dbReference type="GO" id="GO:0098839">
    <property type="term" value="C:postsynaptic density membrane"/>
    <property type="evidence" value="ECO:0007669"/>
    <property type="project" value="UniProtKB-SubCell"/>
</dbReference>
<dbReference type="GO" id="GO:0098793">
    <property type="term" value="C:presynapse"/>
    <property type="evidence" value="ECO:0007669"/>
    <property type="project" value="GOC"/>
</dbReference>
<dbReference type="GO" id="GO:0045202">
    <property type="term" value="C:synapse"/>
    <property type="evidence" value="ECO:0000318"/>
    <property type="project" value="GO_Central"/>
</dbReference>
<dbReference type="GO" id="GO:0097016">
    <property type="term" value="F:L27 domain binding"/>
    <property type="evidence" value="ECO:0000353"/>
    <property type="project" value="BHF-UCL"/>
</dbReference>
<dbReference type="GO" id="GO:0030674">
    <property type="term" value="F:protein-macromolecule adaptor activity"/>
    <property type="evidence" value="ECO:0000318"/>
    <property type="project" value="GO_Central"/>
</dbReference>
<dbReference type="GO" id="GO:0006887">
    <property type="term" value="P:exocytosis"/>
    <property type="evidence" value="ECO:0000304"/>
    <property type="project" value="ProtInc"/>
</dbReference>
<dbReference type="GO" id="GO:0048839">
    <property type="term" value="P:inner ear development"/>
    <property type="evidence" value="ECO:0007669"/>
    <property type="project" value="Ensembl"/>
</dbReference>
<dbReference type="GO" id="GO:0007269">
    <property type="term" value="P:neurotransmitter secretion"/>
    <property type="evidence" value="ECO:0000318"/>
    <property type="project" value="GO_Central"/>
</dbReference>
<dbReference type="GO" id="GO:0015031">
    <property type="term" value="P:protein transport"/>
    <property type="evidence" value="ECO:0007669"/>
    <property type="project" value="UniProtKB-KW"/>
</dbReference>
<dbReference type="GO" id="GO:0065003">
    <property type="term" value="P:protein-containing complex assembly"/>
    <property type="evidence" value="ECO:0000304"/>
    <property type="project" value="ProtInc"/>
</dbReference>
<dbReference type="GO" id="GO:0008582">
    <property type="term" value="P:regulation of synaptic assembly at neuromuscular junction"/>
    <property type="evidence" value="ECO:0000318"/>
    <property type="project" value="GO_Central"/>
</dbReference>
<dbReference type="GO" id="GO:0048489">
    <property type="term" value="P:synaptic vesicle transport"/>
    <property type="evidence" value="ECO:0000318"/>
    <property type="project" value="GO_Central"/>
</dbReference>
<dbReference type="CDD" id="cd06796">
    <property type="entry name" value="PDZ_Lin-7-like"/>
    <property type="match status" value="1"/>
</dbReference>
<dbReference type="FunFam" id="2.30.42.10:FF:000076">
    <property type="entry name" value="Protein lin-7 homolog"/>
    <property type="match status" value="1"/>
</dbReference>
<dbReference type="Gene3D" id="2.30.42.10">
    <property type="match status" value="1"/>
</dbReference>
<dbReference type="Gene3D" id="1.10.287.650">
    <property type="entry name" value="L27 domain"/>
    <property type="match status" value="1"/>
</dbReference>
<dbReference type="InterPro" id="IPR014775">
    <property type="entry name" value="L27_C"/>
</dbReference>
<dbReference type="InterPro" id="IPR004172">
    <property type="entry name" value="L27_dom"/>
</dbReference>
<dbReference type="InterPro" id="IPR036892">
    <property type="entry name" value="L27_dom_sf"/>
</dbReference>
<dbReference type="InterPro" id="IPR017365">
    <property type="entry name" value="LIN7"/>
</dbReference>
<dbReference type="InterPro" id="IPR051109">
    <property type="entry name" value="MAM_complex_regulator"/>
</dbReference>
<dbReference type="InterPro" id="IPR001478">
    <property type="entry name" value="PDZ"/>
</dbReference>
<dbReference type="InterPro" id="IPR036034">
    <property type="entry name" value="PDZ_sf"/>
</dbReference>
<dbReference type="PANTHER" id="PTHR14063">
    <property type="entry name" value="PROTEIN LIN-7 HOMOLOG"/>
    <property type="match status" value="1"/>
</dbReference>
<dbReference type="Pfam" id="PF02828">
    <property type="entry name" value="L27"/>
    <property type="match status" value="1"/>
</dbReference>
<dbReference type="Pfam" id="PF00595">
    <property type="entry name" value="PDZ"/>
    <property type="match status" value="1"/>
</dbReference>
<dbReference type="PIRSF" id="PIRSF038039">
    <property type="entry name" value="Lin-7_homologue"/>
    <property type="match status" value="1"/>
</dbReference>
<dbReference type="SMART" id="SM00569">
    <property type="entry name" value="L27"/>
    <property type="match status" value="1"/>
</dbReference>
<dbReference type="SMART" id="SM00228">
    <property type="entry name" value="PDZ"/>
    <property type="match status" value="1"/>
</dbReference>
<dbReference type="SUPFAM" id="SSF101288">
    <property type="entry name" value="L27 domain"/>
    <property type="match status" value="1"/>
</dbReference>
<dbReference type="SUPFAM" id="SSF50156">
    <property type="entry name" value="PDZ domain-like"/>
    <property type="match status" value="1"/>
</dbReference>
<dbReference type="PROSITE" id="PS51022">
    <property type="entry name" value="L27"/>
    <property type="match status" value="1"/>
</dbReference>
<dbReference type="PROSITE" id="PS50106">
    <property type="entry name" value="PDZ"/>
    <property type="match status" value="1"/>
</dbReference>
<reference key="1">
    <citation type="journal article" date="1998" name="Cell">
        <title>A tripartite protein complex with the potential to couple synaptic vesicle exocytosis to cell adhesion in brain.</title>
        <authorList>
            <person name="Butz S."/>
            <person name="Okamoto M."/>
            <person name="Suedhof T.C."/>
        </authorList>
    </citation>
    <scope>NUCLEOTIDE SEQUENCE [MRNA]</scope>
    <scope>INTERACTION WITH APBA1; CASK; DLG2 AND DLG3</scope>
    <source>
        <tissue>Testis</tissue>
    </source>
</reference>
<reference key="2">
    <citation type="journal article" date="1999" name="J. Neurosci.">
        <title>Characterization of MALS/Velis-1, -2, and -3: a family of mammalian LIN-7 homologs enriched at brain synapses in association with the postsynaptic density-95/NMDA receptor postsynaptic complex.</title>
        <authorList>
            <person name="Jo K."/>
            <person name="Derin R."/>
            <person name="Li M."/>
            <person name="Bredt D.S."/>
        </authorList>
    </citation>
    <scope>NUCLEOTIDE SEQUENCE [MRNA]</scope>
</reference>
<reference key="3">
    <citation type="submission" date="2004-05" db="EMBL/GenBank/DDBJ databases">
        <title>Cloning of human full open reading frames in Gateway(TM) system entry vector (pDONR201).</title>
        <authorList>
            <person name="Ebert L."/>
            <person name="Schick M."/>
            <person name="Neubert P."/>
            <person name="Schatten R."/>
            <person name="Henze S."/>
            <person name="Korn B."/>
        </authorList>
    </citation>
    <scope>NUCLEOTIDE SEQUENCE [LARGE SCALE MRNA]</scope>
</reference>
<reference key="4">
    <citation type="journal article" date="2004" name="Nat. Genet.">
        <title>Complete sequencing and characterization of 21,243 full-length human cDNAs.</title>
        <authorList>
            <person name="Ota T."/>
            <person name="Suzuki Y."/>
            <person name="Nishikawa T."/>
            <person name="Otsuki T."/>
            <person name="Sugiyama T."/>
            <person name="Irie R."/>
            <person name="Wakamatsu A."/>
            <person name="Hayashi K."/>
            <person name="Sato H."/>
            <person name="Nagai K."/>
            <person name="Kimura K."/>
            <person name="Makita H."/>
            <person name="Sekine M."/>
            <person name="Obayashi M."/>
            <person name="Nishi T."/>
            <person name="Shibahara T."/>
            <person name="Tanaka T."/>
            <person name="Ishii S."/>
            <person name="Yamamoto J."/>
            <person name="Saito K."/>
            <person name="Kawai Y."/>
            <person name="Isono Y."/>
            <person name="Nakamura Y."/>
            <person name="Nagahari K."/>
            <person name="Murakami K."/>
            <person name="Yasuda T."/>
            <person name="Iwayanagi T."/>
            <person name="Wagatsuma M."/>
            <person name="Shiratori A."/>
            <person name="Sudo H."/>
            <person name="Hosoiri T."/>
            <person name="Kaku Y."/>
            <person name="Kodaira H."/>
            <person name="Kondo H."/>
            <person name="Sugawara M."/>
            <person name="Takahashi M."/>
            <person name="Kanda K."/>
            <person name="Yokoi T."/>
            <person name="Furuya T."/>
            <person name="Kikkawa E."/>
            <person name="Omura Y."/>
            <person name="Abe K."/>
            <person name="Kamihara K."/>
            <person name="Katsuta N."/>
            <person name="Sato K."/>
            <person name="Tanikawa M."/>
            <person name="Yamazaki M."/>
            <person name="Ninomiya K."/>
            <person name="Ishibashi T."/>
            <person name="Yamashita H."/>
            <person name="Murakawa K."/>
            <person name="Fujimori K."/>
            <person name="Tanai H."/>
            <person name="Kimata M."/>
            <person name="Watanabe M."/>
            <person name="Hiraoka S."/>
            <person name="Chiba Y."/>
            <person name="Ishida S."/>
            <person name="Ono Y."/>
            <person name="Takiguchi S."/>
            <person name="Watanabe S."/>
            <person name="Yosida M."/>
            <person name="Hotuta T."/>
            <person name="Kusano J."/>
            <person name="Kanehori K."/>
            <person name="Takahashi-Fujii A."/>
            <person name="Hara H."/>
            <person name="Tanase T.-O."/>
            <person name="Nomura Y."/>
            <person name="Togiya S."/>
            <person name="Komai F."/>
            <person name="Hara R."/>
            <person name="Takeuchi K."/>
            <person name="Arita M."/>
            <person name="Imose N."/>
            <person name="Musashino K."/>
            <person name="Yuuki H."/>
            <person name="Oshima A."/>
            <person name="Sasaki N."/>
            <person name="Aotsuka S."/>
            <person name="Yoshikawa Y."/>
            <person name="Matsunawa H."/>
            <person name="Ichihara T."/>
            <person name="Shiohata N."/>
            <person name="Sano S."/>
            <person name="Moriya S."/>
            <person name="Momiyama H."/>
            <person name="Satoh N."/>
            <person name="Takami S."/>
            <person name="Terashima Y."/>
            <person name="Suzuki O."/>
            <person name="Nakagawa S."/>
            <person name="Senoh A."/>
            <person name="Mizoguchi H."/>
            <person name="Goto Y."/>
            <person name="Shimizu F."/>
            <person name="Wakebe H."/>
            <person name="Hishigaki H."/>
            <person name="Watanabe T."/>
            <person name="Sugiyama A."/>
            <person name="Takemoto M."/>
            <person name="Kawakami B."/>
            <person name="Yamazaki M."/>
            <person name="Watanabe K."/>
            <person name="Kumagai A."/>
            <person name="Itakura S."/>
            <person name="Fukuzumi Y."/>
            <person name="Fujimori Y."/>
            <person name="Komiyama M."/>
            <person name="Tashiro H."/>
            <person name="Tanigami A."/>
            <person name="Fujiwara T."/>
            <person name="Ono T."/>
            <person name="Yamada K."/>
            <person name="Fujii Y."/>
            <person name="Ozaki K."/>
            <person name="Hirao M."/>
            <person name="Ohmori Y."/>
            <person name="Kawabata A."/>
            <person name="Hikiji T."/>
            <person name="Kobatake N."/>
            <person name="Inagaki H."/>
            <person name="Ikema Y."/>
            <person name="Okamoto S."/>
            <person name="Okitani R."/>
            <person name="Kawakami T."/>
            <person name="Noguchi S."/>
            <person name="Itoh T."/>
            <person name="Shigeta K."/>
            <person name="Senba T."/>
            <person name="Matsumura K."/>
            <person name="Nakajima Y."/>
            <person name="Mizuno T."/>
            <person name="Morinaga M."/>
            <person name="Sasaki M."/>
            <person name="Togashi T."/>
            <person name="Oyama M."/>
            <person name="Hata H."/>
            <person name="Watanabe M."/>
            <person name="Komatsu T."/>
            <person name="Mizushima-Sugano J."/>
            <person name="Satoh T."/>
            <person name="Shirai Y."/>
            <person name="Takahashi Y."/>
            <person name="Nakagawa K."/>
            <person name="Okumura K."/>
            <person name="Nagase T."/>
            <person name="Nomura N."/>
            <person name="Kikuchi H."/>
            <person name="Masuho Y."/>
            <person name="Yamashita R."/>
            <person name="Nakai K."/>
            <person name="Yada T."/>
            <person name="Nakamura Y."/>
            <person name="Ohara O."/>
            <person name="Isogai T."/>
            <person name="Sugano S."/>
        </authorList>
    </citation>
    <scope>NUCLEOTIDE SEQUENCE [LARGE SCALE MRNA]</scope>
    <source>
        <tissue>Corpus callosum</tissue>
    </source>
</reference>
<reference key="5">
    <citation type="journal article" date="2004" name="Genome Res.">
        <title>The status, quality, and expansion of the NIH full-length cDNA project: the Mammalian Gene Collection (MGC).</title>
        <authorList>
            <consortium name="The MGC Project Team"/>
        </authorList>
    </citation>
    <scope>NUCLEOTIDE SEQUENCE [LARGE SCALE MRNA]</scope>
    <source>
        <tissue>Mammary gland</tissue>
    </source>
</reference>
<reference key="6">
    <citation type="journal article" date="1998" name="Oncogene">
        <title>The C-terminus of the HTLV-1 Tax oncoprotein mediates interaction with the PDZ domain of cellular proteins.</title>
        <authorList>
            <person name="Rousset R."/>
            <person name="Fabre S."/>
            <person name="Desbois C."/>
            <person name="Bantignies F."/>
            <person name="Jalinot P."/>
        </authorList>
    </citation>
    <scope>NUCLEOTIDE SEQUENCE [MRNA] OF 32-233</scope>
    <scope>INTERACTION WITH VIRAL ONCOPROTEIN TAX</scope>
</reference>
<reference key="7">
    <citation type="journal article" date="2001" name="Biochim. Biophys. Acta">
        <title>VAM-1: a new member of the MAGUK family binds to human Veli-1 through a conserved domain.</title>
        <authorList>
            <person name="Tseng T.-C."/>
            <person name="Marfatia S.M."/>
            <person name="Bryant P.J."/>
            <person name="Pack S."/>
            <person name="Zhuang Z."/>
            <person name="O'Brien J.E."/>
            <person name="Lin L."/>
            <person name="Hanada T."/>
            <person name="Chishti A.H."/>
        </authorList>
    </citation>
    <scope>INTERACTION WITH PALS2</scope>
    <scope>TISSUE SPECIFICITY</scope>
</reference>
<reference key="8">
    <citation type="journal article" date="2003" name="Dev. Cell">
        <title>Polar expression of ErbB-2/HER2 in epithelia. Bimodal regulation by Lin-7.</title>
        <authorList>
            <person name="Shelly M."/>
            <person name="Mosesson Y."/>
            <person name="Citri A."/>
            <person name="Lavi S."/>
            <person name="Zwang Y."/>
            <person name="Melamed-Book N."/>
            <person name="Aroeti B."/>
            <person name="Yarden Y."/>
        </authorList>
    </citation>
    <scope>SUBCELLULAR LOCATION</scope>
    <scope>INTERACTION WITH EGFR; ERBB2; ERBB3 AND ERBB4</scope>
    <scope>FUNCTION</scope>
    <scope>DOMAIN</scope>
</reference>
<reference key="9">
    <citation type="journal article" date="2007" name="J. Biol. Chem.">
        <title>The stardust family protein MPP7 forms a tripartite complex with LIN7 and DLG1 that regulates the stability and localization of DLG1 to cell junctions.</title>
        <authorList>
            <person name="Bohl J."/>
            <person name="Brimer N."/>
            <person name="Lyons C."/>
            <person name="Vande Pol S.B."/>
        </authorList>
    </citation>
    <scope>INTERACTION WITH DLG1 AND MPP7</scope>
</reference>
<comment type="function">
    <text evidence="2 6">Plays a role in establishing and maintaining the asymmetric distribution of channels and receptors at the plasma membrane of polarized cells. Forms membrane-associated multiprotein complexes that may regulate delivery and recycling of proteins to the correct membrane domains. The tripartite complex composed of LIN7 (LIN7A, LIN7B or LIN7C), CASK and APBA1 associates with the motor protein KIF17 to transport vesicles containing N-methyl-D-aspartate (NMDA) receptor subunit NR2B along microtubules (By similarity). This complex may have the potential to couple synaptic vesicle exocytosis to cell adhesion in brain. Ensures the proper localization of GRIN2B (subunit 2B of the NMDA receptor) to neuronal postsynaptic density and may function in localizing synaptic vesicles at synapses where it is recruited by beta-catenin and cadherin. Required to localize Kir2 channels, GABA transporter (SLC6A12) and EGFR/ERBB1, ERBB2, ERBB3 and ERBB4 to the basolateral membrane of epithelial cells.</text>
</comment>
<comment type="subunit">
    <text evidence="1 2 5 6 7 8 9">Forms a complex with CASK and CASKIN1 (By similarity). Component of the brain-specific heterotrimeric complex (LIN-10-LIN-2-LIN-7 complex) composed of at least APBA1, CASK, and LIN7, which associates with the motor protein KIF17 to transport vesicles along microtubules (By similarity). Can also interact with other modular proteins containing protein-protein interaction domains like PALS1, PALS2, MPP7, DLG1, DLG2 and DLG3 through its L27 domain. Interacts with DLG4, GRIN2B and MARCHF11 as well as CDH1 and CTNNB1, the channels KCNJ12/Kir2.2, KCNJ4/Kir2.3 and probably KCNJ2/Kir2.1 and SLC6A12/BGT-1 via its PDZ domain. The association of LIN7A with cadherin and beta-catenin is calcium-dependent, occurs at synaptic junctions and requires the actin cytoskeleton. Interacts with EGFR, ERBB2, ERBB3 and ERBB4 with both PDZ and KID domains. Associates with KIF17 via APBA1. Interacts with HTR4 (By similarity). Forms a tripartite complex composed of DLG1, MPP7 and LIN7 (LIN7A or LIN7C).</text>
</comment>
<comment type="interaction">
    <interactant intactId="EBI-2513988">
        <id>O14910</id>
    </interactant>
    <interactant intactId="EBI-1215506">
        <id>O14936</id>
        <label>CASK</label>
    </interactant>
    <organismsDiffer>false</organismsDiffer>
    <experiments>7</experiments>
</comment>
<comment type="interaction">
    <interactant intactId="EBI-2513988">
        <id>O14910</id>
    </interactant>
    <interactant intactId="EBI-12007726">
        <id>O14936-4</id>
        <label>CASK</label>
    </interactant>
    <organismsDiffer>false</organismsDiffer>
    <experiments>3</experiments>
</comment>
<comment type="interaction">
    <interactant intactId="EBI-2513988">
        <id>O14910</id>
    </interactant>
    <interactant intactId="EBI-947551">
        <id>Q9H2X0</id>
        <label>CHRD</label>
    </interactant>
    <organismsDiffer>false</organismsDiffer>
    <experiments>3</experiments>
</comment>
<comment type="interaction">
    <interactant intactId="EBI-2513988">
        <id>O14910</id>
    </interactant>
    <interactant intactId="EBI-947964">
        <id>Q16610</id>
        <label>ECM1</label>
    </interactant>
    <organismsDiffer>false</organismsDiffer>
    <experiments>3</experiments>
</comment>
<comment type="interaction">
    <interactant intactId="EBI-2513988">
        <id>O14910</id>
    </interactant>
    <interactant intactId="EBI-10175124">
        <id>Q8IZU0</id>
        <label>FAM9B</label>
    </interactant>
    <organismsDiffer>false</organismsDiffer>
    <experiments>3</experiments>
</comment>
<comment type="interaction">
    <interactant intactId="EBI-2513988">
        <id>O14910</id>
    </interactant>
    <interactant intactId="EBI-618309">
        <id>Q08379</id>
        <label>GOLGA2</label>
    </interactant>
    <organismsDiffer>false</organismsDiffer>
    <experiments>3</experiments>
</comment>
<comment type="interaction">
    <interactant intactId="EBI-2513988">
        <id>O14910</id>
    </interactant>
    <interactant intactId="EBI-724076">
        <id>Q99750</id>
        <label>MDFI</label>
    </interactant>
    <organismsDiffer>false</organismsDiffer>
    <experiments>3</experiments>
</comment>
<comment type="interaction">
    <interactant intactId="EBI-2513988">
        <id>O14910</id>
    </interactant>
    <interactant intactId="EBI-10181752">
        <id>Q14168-2</id>
        <label>MPP2</label>
    </interactant>
    <organismsDiffer>false</organismsDiffer>
    <experiments>4</experiments>
</comment>
<comment type="interaction">
    <interactant intactId="EBI-2513988">
        <id>O14910</id>
    </interactant>
    <interactant intactId="EBI-14385193">
        <id>Q14168-4</id>
        <label>MPP2</label>
    </interactant>
    <organismsDiffer>false</organismsDiffer>
    <experiments>7</experiments>
</comment>
<comment type="interaction">
    <interactant intactId="EBI-2513988">
        <id>O14910</id>
    </interactant>
    <interactant intactId="EBI-716157">
        <id>Q13368</id>
        <label>MPP3</label>
    </interactant>
    <organismsDiffer>false</organismsDiffer>
    <experiments>5</experiments>
</comment>
<comment type="interaction">
    <interactant intactId="EBI-2513988">
        <id>O14910</id>
    </interactant>
    <interactant intactId="EBI-2514004">
        <id>Q5T2T1</id>
        <label>MPP7</label>
    </interactant>
    <organismsDiffer>false</organismsDiffer>
    <experiments>9</experiments>
</comment>
<comment type="interaction">
    <interactant intactId="EBI-2513988">
        <id>O14910</id>
    </interactant>
    <interactant intactId="EBI-945833">
        <id>Q7Z3S9</id>
        <label>NOTCH2NLA</label>
    </interactant>
    <organismsDiffer>false</organismsDiffer>
    <experiments>3</experiments>
</comment>
<comment type="interaction">
    <interactant intactId="EBI-2513988">
        <id>O14910</id>
    </interactant>
    <interactant intactId="EBI-2513978">
        <id>Q8N3R9</id>
        <label>PALS1</label>
    </interactant>
    <organismsDiffer>false</organismsDiffer>
    <experiments>10</experiments>
</comment>
<comment type="interaction">
    <interactant intactId="EBI-2513988">
        <id>O14910</id>
    </interactant>
    <interactant intactId="EBI-2683764">
        <id>Q9NZW5</id>
        <label>PALS2</label>
    </interactant>
    <organismsDiffer>false</organismsDiffer>
    <experiments>4</experiments>
</comment>
<comment type="interaction">
    <interactant intactId="EBI-2513988">
        <id>O14910</id>
    </interactant>
    <interactant intactId="EBI-444225">
        <id>Q15942</id>
        <label>ZYX</label>
    </interactant>
    <organismsDiffer>false</organismsDiffer>
    <experiments>3</experiments>
</comment>
<comment type="subcellular location">
    <subcellularLocation>
        <location evidence="2">Cell membrane</location>
        <topology evidence="2">Peripheral membrane protein</topology>
    </subcellularLocation>
    <subcellularLocation>
        <location evidence="2">Basolateral cell membrane</location>
        <topology evidence="2">Peripheral membrane protein</topology>
    </subcellularLocation>
    <subcellularLocation>
        <location evidence="2">Cell junction</location>
    </subcellularLocation>
    <subcellularLocation>
        <location evidence="2">Postsynaptic density membrane</location>
        <topology evidence="2">Peripheral membrane protein</topology>
    </subcellularLocation>
    <subcellularLocation>
        <location evidence="2">Cell junction</location>
        <location evidence="2">Tight junction</location>
    </subcellularLocation>
    <text evidence="2">Mainly basolateral in renal epithelial cells.</text>
</comment>
<comment type="tissue specificity">
    <text evidence="5">Expressed in brain, testis, kidney, placenta and liver.</text>
</comment>
<comment type="domain">
    <text evidence="6">The kinase interacting site is required for proper delivery of ERBB2 to the basolateral membrane.</text>
</comment>
<comment type="domain">
    <text evidence="6">The PDZ domain regulates endocytosis and recycling of the receptor at the membrane.</text>
</comment>
<comment type="domain">
    <text evidence="1">The L27 domain mediates interaction with CASK and is involved in the formation of multimeric complexes and the association of LIN7 to membranes.</text>
</comment>
<comment type="similarity">
    <text evidence="10">Belongs to the lin-7 family.</text>
</comment>
<protein>
    <recommendedName>
        <fullName>Protein lin-7 homolog A</fullName>
        <shortName>Lin-7A</shortName>
        <shortName>hLin-7</shortName>
    </recommendedName>
    <alternativeName>
        <fullName>Mammalian lin-seven protein 1</fullName>
        <shortName>MALS-1</shortName>
    </alternativeName>
    <alternativeName>
        <fullName>Tax interaction protein 33</fullName>
        <shortName>TIP-33</shortName>
    </alternativeName>
    <alternativeName>
        <fullName>Vertebrate lin-7 homolog 1</fullName>
        <shortName>Veli-1</shortName>
    </alternativeName>
</protein>
<keyword id="KW-0965">Cell junction</keyword>
<keyword id="KW-1003">Cell membrane</keyword>
<keyword id="KW-0268">Exocytosis</keyword>
<keyword id="KW-0472">Membrane</keyword>
<keyword id="KW-0628">Postsynaptic cell membrane</keyword>
<keyword id="KW-0653">Protein transport</keyword>
<keyword id="KW-1267">Proteomics identification</keyword>
<keyword id="KW-1185">Reference proteome</keyword>
<keyword id="KW-0770">Synapse</keyword>
<keyword id="KW-0796">Tight junction</keyword>
<keyword id="KW-0813">Transport</keyword>
<evidence type="ECO:0000250" key="1"/>
<evidence type="ECO:0000250" key="2">
    <source>
        <dbReference type="UniProtKB" id="Q8JZS0"/>
    </source>
</evidence>
<evidence type="ECO:0000255" key="3">
    <source>
        <dbReference type="PROSITE-ProRule" id="PRU00143"/>
    </source>
</evidence>
<evidence type="ECO:0000255" key="4">
    <source>
        <dbReference type="PROSITE-ProRule" id="PRU00365"/>
    </source>
</evidence>
<evidence type="ECO:0000269" key="5">
    <source>
    </source>
</evidence>
<evidence type="ECO:0000269" key="6">
    <source>
    </source>
</evidence>
<evidence type="ECO:0000269" key="7">
    <source>
    </source>
</evidence>
<evidence type="ECO:0000269" key="8">
    <source>
    </source>
</evidence>
<evidence type="ECO:0000269" key="9">
    <source>
    </source>
</evidence>
<evidence type="ECO:0000305" key="10"/>